<reference key="1">
    <citation type="journal article" date="2009" name="J. Bacteriol.">
        <title>Complete genome sequence of the extremophilic Bacillus cereus strain Q1 with industrial applications.</title>
        <authorList>
            <person name="Xiong Z."/>
            <person name="Jiang Y."/>
            <person name="Qi D."/>
            <person name="Lu H."/>
            <person name="Yang F."/>
            <person name="Yang J."/>
            <person name="Chen L."/>
            <person name="Sun L."/>
            <person name="Xu X."/>
            <person name="Xue Y."/>
            <person name="Zhu Y."/>
            <person name="Jin Q."/>
        </authorList>
    </citation>
    <scope>NUCLEOTIDE SEQUENCE [LARGE SCALE GENOMIC DNA]</scope>
    <source>
        <strain>Q1</strain>
    </source>
</reference>
<gene>
    <name evidence="1" type="primary">purH</name>
    <name type="ordered locus">BCQ_0350</name>
</gene>
<dbReference type="EC" id="2.1.2.3" evidence="1"/>
<dbReference type="EC" id="3.5.4.10" evidence="1"/>
<dbReference type="EMBL" id="CP000227">
    <property type="protein sequence ID" value="ACM10822.1"/>
    <property type="molecule type" value="Genomic_DNA"/>
</dbReference>
<dbReference type="SMR" id="B9J1K9"/>
<dbReference type="KEGG" id="bcq:BCQ_0350"/>
<dbReference type="HOGENOM" id="CLU_016316_5_2_9"/>
<dbReference type="UniPathway" id="UPA00074">
    <property type="reaction ID" value="UER00133"/>
</dbReference>
<dbReference type="UniPathway" id="UPA00074">
    <property type="reaction ID" value="UER00135"/>
</dbReference>
<dbReference type="Proteomes" id="UP000000441">
    <property type="component" value="Chromosome"/>
</dbReference>
<dbReference type="GO" id="GO:0005829">
    <property type="term" value="C:cytosol"/>
    <property type="evidence" value="ECO:0007669"/>
    <property type="project" value="TreeGrafter"/>
</dbReference>
<dbReference type="GO" id="GO:0003937">
    <property type="term" value="F:IMP cyclohydrolase activity"/>
    <property type="evidence" value="ECO:0007669"/>
    <property type="project" value="UniProtKB-UniRule"/>
</dbReference>
<dbReference type="GO" id="GO:0004643">
    <property type="term" value="F:phosphoribosylaminoimidazolecarboxamide formyltransferase activity"/>
    <property type="evidence" value="ECO:0007669"/>
    <property type="project" value="UniProtKB-UniRule"/>
</dbReference>
<dbReference type="GO" id="GO:0006189">
    <property type="term" value="P:'de novo' IMP biosynthetic process"/>
    <property type="evidence" value="ECO:0007669"/>
    <property type="project" value="UniProtKB-UniRule"/>
</dbReference>
<dbReference type="CDD" id="cd01421">
    <property type="entry name" value="IMPCH"/>
    <property type="match status" value="1"/>
</dbReference>
<dbReference type="FunFam" id="3.40.140.20:FF:000001">
    <property type="entry name" value="Bifunctional purine biosynthesis protein PurH"/>
    <property type="match status" value="1"/>
</dbReference>
<dbReference type="FunFam" id="3.40.140.20:FF:000002">
    <property type="entry name" value="Bifunctional purine biosynthesis protein PurH"/>
    <property type="match status" value="1"/>
</dbReference>
<dbReference type="FunFam" id="3.40.50.1380:FF:000001">
    <property type="entry name" value="Bifunctional purine biosynthesis protein PurH"/>
    <property type="match status" value="1"/>
</dbReference>
<dbReference type="Gene3D" id="3.40.140.20">
    <property type="match status" value="2"/>
</dbReference>
<dbReference type="Gene3D" id="3.40.50.1380">
    <property type="entry name" value="Methylglyoxal synthase-like domain"/>
    <property type="match status" value="1"/>
</dbReference>
<dbReference type="HAMAP" id="MF_00139">
    <property type="entry name" value="PurH"/>
    <property type="match status" value="1"/>
</dbReference>
<dbReference type="InterPro" id="IPR024051">
    <property type="entry name" value="AICAR_Tfase_dup_dom_sf"/>
</dbReference>
<dbReference type="InterPro" id="IPR016193">
    <property type="entry name" value="Cytidine_deaminase-like"/>
</dbReference>
<dbReference type="InterPro" id="IPR011607">
    <property type="entry name" value="MGS-like_dom"/>
</dbReference>
<dbReference type="InterPro" id="IPR036914">
    <property type="entry name" value="MGS-like_dom_sf"/>
</dbReference>
<dbReference type="InterPro" id="IPR002695">
    <property type="entry name" value="PurH-like"/>
</dbReference>
<dbReference type="NCBIfam" id="NF002049">
    <property type="entry name" value="PRK00881.1"/>
    <property type="match status" value="1"/>
</dbReference>
<dbReference type="NCBIfam" id="TIGR00355">
    <property type="entry name" value="purH"/>
    <property type="match status" value="1"/>
</dbReference>
<dbReference type="PANTHER" id="PTHR11692:SF0">
    <property type="entry name" value="BIFUNCTIONAL PURINE BIOSYNTHESIS PROTEIN ATIC"/>
    <property type="match status" value="1"/>
</dbReference>
<dbReference type="PANTHER" id="PTHR11692">
    <property type="entry name" value="BIFUNCTIONAL PURINE BIOSYNTHESIS PROTEIN PURH"/>
    <property type="match status" value="1"/>
</dbReference>
<dbReference type="Pfam" id="PF01808">
    <property type="entry name" value="AICARFT_IMPCHas"/>
    <property type="match status" value="1"/>
</dbReference>
<dbReference type="Pfam" id="PF02142">
    <property type="entry name" value="MGS"/>
    <property type="match status" value="1"/>
</dbReference>
<dbReference type="PIRSF" id="PIRSF000414">
    <property type="entry name" value="AICARFT_IMPCHas"/>
    <property type="match status" value="1"/>
</dbReference>
<dbReference type="SMART" id="SM00798">
    <property type="entry name" value="AICARFT_IMPCHas"/>
    <property type="match status" value="1"/>
</dbReference>
<dbReference type="SMART" id="SM00851">
    <property type="entry name" value="MGS"/>
    <property type="match status" value="1"/>
</dbReference>
<dbReference type="SUPFAM" id="SSF53927">
    <property type="entry name" value="Cytidine deaminase-like"/>
    <property type="match status" value="1"/>
</dbReference>
<dbReference type="SUPFAM" id="SSF52335">
    <property type="entry name" value="Methylglyoxal synthase-like"/>
    <property type="match status" value="1"/>
</dbReference>
<dbReference type="PROSITE" id="PS51855">
    <property type="entry name" value="MGS"/>
    <property type="match status" value="1"/>
</dbReference>
<evidence type="ECO:0000255" key="1">
    <source>
        <dbReference type="HAMAP-Rule" id="MF_00139"/>
    </source>
</evidence>
<evidence type="ECO:0000255" key="2">
    <source>
        <dbReference type="PROSITE-ProRule" id="PRU01202"/>
    </source>
</evidence>
<sequence length="511" mass="55630">MKKRALVSVSDKTGVVEFVKGLLEQGIEVISTGGTKKLLEENGLQVIGISEVTGFPEIMDGRVKTLHPNIHGGLLAVRDNETHVAQMNELGMEPIDFVVVNLYPFKETIAKPDVTFADAIENIDIGGPTMIRSAAKNHKFVSVIVDPVDYDIVLAELKENGEVKEETKRKLAAKVFRHTAAYDALISNYLTEQMGEESPETLTVTFEKKQDLRYGENPHQKATFYKAPFAVTSSVAYAEQLHGKELSYNNINDADAALSIVKEFTEPAVVAVKHMNPCGVGVGTDIHEAYTRAYEADPVSIFGGIIAANREIDKATAEKLHEIFLEIIIAPSFSKEALEVLQSKKNLRLLTVNIEKATSASKKLTSVQGGLLVQEEDTLSLDESTISIPTKREPSEQEWKDLKLAWKVVKHVKSNAIVLAKDDMTIGVGAGQMNRVGSAKIAITQAGEKAQGSALASDAFFPMPDTLEEAAKAGITAIIQPGGSIRDEDSIKVADTYGIAMVFTGVRHFKH</sequence>
<name>PUR9_BACCQ</name>
<accession>B9J1K9</accession>
<keyword id="KW-0378">Hydrolase</keyword>
<keyword id="KW-0511">Multifunctional enzyme</keyword>
<keyword id="KW-0658">Purine biosynthesis</keyword>
<keyword id="KW-0808">Transferase</keyword>
<feature type="chain" id="PRO_1000122947" description="Bifunctional purine biosynthesis protein PurH">
    <location>
        <begin position="1"/>
        <end position="511"/>
    </location>
</feature>
<feature type="domain" description="MGS-like" evidence="2">
    <location>
        <begin position="1"/>
        <end position="145"/>
    </location>
</feature>
<comment type="catalytic activity">
    <reaction evidence="1">
        <text>(6R)-10-formyltetrahydrofolate + 5-amino-1-(5-phospho-beta-D-ribosyl)imidazole-4-carboxamide = 5-formamido-1-(5-phospho-D-ribosyl)imidazole-4-carboxamide + (6S)-5,6,7,8-tetrahydrofolate</text>
        <dbReference type="Rhea" id="RHEA:22192"/>
        <dbReference type="ChEBI" id="CHEBI:57453"/>
        <dbReference type="ChEBI" id="CHEBI:58467"/>
        <dbReference type="ChEBI" id="CHEBI:58475"/>
        <dbReference type="ChEBI" id="CHEBI:195366"/>
        <dbReference type="EC" id="2.1.2.3"/>
    </reaction>
</comment>
<comment type="catalytic activity">
    <reaction evidence="1">
        <text>IMP + H2O = 5-formamido-1-(5-phospho-D-ribosyl)imidazole-4-carboxamide</text>
        <dbReference type="Rhea" id="RHEA:18445"/>
        <dbReference type="ChEBI" id="CHEBI:15377"/>
        <dbReference type="ChEBI" id="CHEBI:58053"/>
        <dbReference type="ChEBI" id="CHEBI:58467"/>
        <dbReference type="EC" id="3.5.4.10"/>
    </reaction>
</comment>
<comment type="pathway">
    <text evidence="1">Purine metabolism; IMP biosynthesis via de novo pathway; 5-formamido-1-(5-phospho-D-ribosyl)imidazole-4-carboxamide from 5-amino-1-(5-phospho-D-ribosyl)imidazole-4-carboxamide (10-formyl THF route): step 1/1.</text>
</comment>
<comment type="pathway">
    <text evidence="1">Purine metabolism; IMP biosynthesis via de novo pathway; IMP from 5-formamido-1-(5-phospho-D-ribosyl)imidazole-4-carboxamide: step 1/1.</text>
</comment>
<comment type="domain">
    <text evidence="1">The IMP cyclohydrolase activity resides in the N-terminal region.</text>
</comment>
<comment type="similarity">
    <text evidence="1">Belongs to the PurH family.</text>
</comment>
<protein>
    <recommendedName>
        <fullName evidence="1">Bifunctional purine biosynthesis protein PurH</fullName>
    </recommendedName>
    <domain>
        <recommendedName>
            <fullName evidence="1">Phosphoribosylaminoimidazolecarboxamide formyltransferase</fullName>
            <ecNumber evidence="1">2.1.2.3</ecNumber>
        </recommendedName>
        <alternativeName>
            <fullName evidence="1">AICAR transformylase</fullName>
        </alternativeName>
    </domain>
    <domain>
        <recommendedName>
            <fullName evidence="1">IMP cyclohydrolase</fullName>
            <ecNumber evidence="1">3.5.4.10</ecNumber>
        </recommendedName>
        <alternativeName>
            <fullName evidence="1">ATIC</fullName>
        </alternativeName>
        <alternativeName>
            <fullName evidence="1">IMP synthase</fullName>
        </alternativeName>
        <alternativeName>
            <fullName evidence="1">Inosinicase</fullName>
        </alternativeName>
    </domain>
</protein>
<proteinExistence type="inferred from homology"/>
<organism>
    <name type="scientific">Bacillus cereus (strain Q1)</name>
    <dbReference type="NCBI Taxonomy" id="361100"/>
    <lineage>
        <taxon>Bacteria</taxon>
        <taxon>Bacillati</taxon>
        <taxon>Bacillota</taxon>
        <taxon>Bacilli</taxon>
        <taxon>Bacillales</taxon>
        <taxon>Bacillaceae</taxon>
        <taxon>Bacillus</taxon>
        <taxon>Bacillus cereus group</taxon>
    </lineage>
</organism>